<feature type="signal peptide" evidence="1">
    <location>
        <begin position="1"/>
        <end position="30"/>
    </location>
</feature>
<feature type="chain" id="PRO_0000287100" description="Transmembrane protein 132D">
    <location>
        <begin position="31"/>
        <end position="1099"/>
    </location>
</feature>
<feature type="topological domain" description="Extracellular" evidence="1">
    <location>
        <begin position="31"/>
        <end position="915"/>
    </location>
</feature>
<feature type="transmembrane region" description="Helical" evidence="1">
    <location>
        <begin position="916"/>
        <end position="936"/>
    </location>
</feature>
<feature type="topological domain" description="Cytoplasmic" evidence="1">
    <location>
        <begin position="937"/>
        <end position="1099"/>
    </location>
</feature>
<feature type="region of interest" description="Disordered" evidence="2">
    <location>
        <begin position="797"/>
        <end position="858"/>
    </location>
</feature>
<feature type="compositionally biased region" description="Low complexity" evidence="2">
    <location>
        <begin position="835"/>
        <end position="848"/>
    </location>
</feature>
<feature type="glycosylation site" description="N-linked (GlcNAc...) asparagine" evidence="1">
    <location>
        <position position="505"/>
    </location>
</feature>
<feature type="splice variant" id="VSP_025307" description="In isoform 2." evidence="5">
    <location>
        <begin position="1"/>
        <end position="462"/>
    </location>
</feature>
<feature type="splice variant" id="VSP_025308" description="In isoform 2." evidence="5">
    <original>VTELLESVECRSSDEDVIK</original>
    <variation>MQRDESSPFPPLFSLTSSQ</variation>
    <location>
        <begin position="463"/>
        <end position="481"/>
    </location>
</feature>
<feature type="sequence variant" id="VAR_053887" description="In dbSNP:rs12816729.">
    <original>E</original>
    <variation>Q</variation>
    <location>
        <position position="436"/>
    </location>
</feature>
<feature type="sequence variant" id="VAR_053888" description="In dbSNP:rs12816538.">
    <original>D</original>
    <variation>H</variation>
    <location>
        <position position="460"/>
    </location>
</feature>
<feature type="sequence variant" id="VAR_032264" description="In dbSNP:rs555131.">
    <original>L</original>
    <variation>F</variation>
    <location>
        <position position="878"/>
    </location>
</feature>
<feature type="sequence conflict" description="In Ref. 1; BAC97794." evidence="7" ref="1">
    <original>A</original>
    <variation>T</variation>
    <location>
        <position position="696"/>
    </location>
</feature>
<feature type="sequence conflict" description="In Ref. 3; AAI14627." evidence="7" ref="3">
    <original>S</original>
    <variation>L</variation>
    <location>
        <position position="831"/>
    </location>
</feature>
<gene>
    <name evidence="9" type="primary">TMEM132D</name>
    <name type="synonym">HBE120</name>
    <name type="synonym">KIAA1944</name>
    <name evidence="6" type="synonym">MOLT</name>
</gene>
<reference key="1">
    <citation type="journal article" date="2003" name="J. Biochem.">
        <title>Molecular cloning of a novel transmembrane protein MOLT expressed by mature oligodendrocytes.</title>
        <authorList>
            <person name="Nomoto H."/>
            <person name="Yonezawa T."/>
            <person name="Itoh K."/>
            <person name="Ono K."/>
            <person name="Yamamoto K."/>
            <person name="Oohashi T."/>
            <person name="Shiraga F."/>
            <person name="Ohtsuki H."/>
            <person name="Ninomiya Y."/>
        </authorList>
    </citation>
    <scope>NUCLEOTIDE SEQUENCE [MRNA] (ISOFORM 1)</scope>
    <scope>TISSUE SPECIFICITY</scope>
</reference>
<reference key="2">
    <citation type="journal article" date="2001" name="DNA Res.">
        <title>Prediction of the coding sequences of unidentified human genes. XXII. The complete sequences of 50 new cDNA clones which code for large proteins.</title>
        <authorList>
            <person name="Nagase T."/>
            <person name="Kikuno R."/>
            <person name="Ohara O."/>
        </authorList>
    </citation>
    <scope>NUCLEOTIDE SEQUENCE [LARGE SCALE MRNA] (ISOFORM 2)</scope>
    <source>
        <tissue>Brain</tissue>
    </source>
</reference>
<reference key="3">
    <citation type="journal article" date="2004" name="Genome Res.">
        <title>The status, quality, and expansion of the NIH full-length cDNA project: the Mammalian Gene Collection (MGC).</title>
        <authorList>
            <consortium name="The MGC Project Team"/>
        </authorList>
    </citation>
    <scope>NUCLEOTIDE SEQUENCE [LARGE SCALE MRNA] (ISOFORM 1)</scope>
</reference>
<reference key="4">
    <citation type="journal article" date="2007" name="BMC Genomics">
        <title>The full-ORF clone resource of the German cDNA consortium.</title>
        <authorList>
            <person name="Bechtel S."/>
            <person name="Rosenfelder H."/>
            <person name="Duda A."/>
            <person name="Schmidt C.P."/>
            <person name="Ernst U."/>
            <person name="Wellenreuther R."/>
            <person name="Mehrle A."/>
            <person name="Schuster C."/>
            <person name="Bahr A."/>
            <person name="Bloecker H."/>
            <person name="Heubner D."/>
            <person name="Hoerlein A."/>
            <person name="Michel G."/>
            <person name="Wedler H."/>
            <person name="Koehrer K."/>
            <person name="Ottenwaelder B."/>
            <person name="Poustka A."/>
            <person name="Wiemann S."/>
            <person name="Schupp I."/>
        </authorList>
    </citation>
    <scope>NUCLEOTIDE SEQUENCE [LARGE SCALE MRNA] OF 851-1099 (ISOFORM 1)</scope>
    <source>
        <tissue>Amygdala</tissue>
    </source>
</reference>
<reference key="5">
    <citation type="journal article" date="2004" name="Nat. Genet.">
        <title>Complete sequencing and characterization of 21,243 full-length human cDNAs.</title>
        <authorList>
            <person name="Ota T."/>
            <person name="Suzuki Y."/>
            <person name="Nishikawa T."/>
            <person name="Otsuki T."/>
            <person name="Sugiyama T."/>
            <person name="Irie R."/>
            <person name="Wakamatsu A."/>
            <person name="Hayashi K."/>
            <person name="Sato H."/>
            <person name="Nagai K."/>
            <person name="Kimura K."/>
            <person name="Makita H."/>
            <person name="Sekine M."/>
            <person name="Obayashi M."/>
            <person name="Nishi T."/>
            <person name="Shibahara T."/>
            <person name="Tanaka T."/>
            <person name="Ishii S."/>
            <person name="Yamamoto J."/>
            <person name="Saito K."/>
            <person name="Kawai Y."/>
            <person name="Isono Y."/>
            <person name="Nakamura Y."/>
            <person name="Nagahari K."/>
            <person name="Murakami K."/>
            <person name="Yasuda T."/>
            <person name="Iwayanagi T."/>
            <person name="Wagatsuma M."/>
            <person name="Shiratori A."/>
            <person name="Sudo H."/>
            <person name="Hosoiri T."/>
            <person name="Kaku Y."/>
            <person name="Kodaira H."/>
            <person name="Kondo H."/>
            <person name="Sugawara M."/>
            <person name="Takahashi M."/>
            <person name="Kanda K."/>
            <person name="Yokoi T."/>
            <person name="Furuya T."/>
            <person name="Kikkawa E."/>
            <person name="Omura Y."/>
            <person name="Abe K."/>
            <person name="Kamihara K."/>
            <person name="Katsuta N."/>
            <person name="Sato K."/>
            <person name="Tanikawa M."/>
            <person name="Yamazaki M."/>
            <person name="Ninomiya K."/>
            <person name="Ishibashi T."/>
            <person name="Yamashita H."/>
            <person name="Murakawa K."/>
            <person name="Fujimori K."/>
            <person name="Tanai H."/>
            <person name="Kimata M."/>
            <person name="Watanabe M."/>
            <person name="Hiraoka S."/>
            <person name="Chiba Y."/>
            <person name="Ishida S."/>
            <person name="Ono Y."/>
            <person name="Takiguchi S."/>
            <person name="Watanabe S."/>
            <person name="Yosida M."/>
            <person name="Hotuta T."/>
            <person name="Kusano J."/>
            <person name="Kanehori K."/>
            <person name="Takahashi-Fujii A."/>
            <person name="Hara H."/>
            <person name="Tanase T.-O."/>
            <person name="Nomura Y."/>
            <person name="Togiya S."/>
            <person name="Komai F."/>
            <person name="Hara R."/>
            <person name="Takeuchi K."/>
            <person name="Arita M."/>
            <person name="Imose N."/>
            <person name="Musashino K."/>
            <person name="Yuuki H."/>
            <person name="Oshima A."/>
            <person name="Sasaki N."/>
            <person name="Aotsuka S."/>
            <person name="Yoshikawa Y."/>
            <person name="Matsunawa H."/>
            <person name="Ichihara T."/>
            <person name="Shiohata N."/>
            <person name="Sano S."/>
            <person name="Moriya S."/>
            <person name="Momiyama H."/>
            <person name="Satoh N."/>
            <person name="Takami S."/>
            <person name="Terashima Y."/>
            <person name="Suzuki O."/>
            <person name="Nakagawa S."/>
            <person name="Senoh A."/>
            <person name="Mizoguchi H."/>
            <person name="Goto Y."/>
            <person name="Shimizu F."/>
            <person name="Wakebe H."/>
            <person name="Hishigaki H."/>
            <person name="Watanabe T."/>
            <person name="Sugiyama A."/>
            <person name="Takemoto M."/>
            <person name="Kawakami B."/>
            <person name="Yamazaki M."/>
            <person name="Watanabe K."/>
            <person name="Kumagai A."/>
            <person name="Itakura S."/>
            <person name="Fukuzumi Y."/>
            <person name="Fujimori Y."/>
            <person name="Komiyama M."/>
            <person name="Tashiro H."/>
            <person name="Tanigami A."/>
            <person name="Fujiwara T."/>
            <person name="Ono T."/>
            <person name="Yamada K."/>
            <person name="Fujii Y."/>
            <person name="Ozaki K."/>
            <person name="Hirao M."/>
            <person name="Ohmori Y."/>
            <person name="Kawabata A."/>
            <person name="Hikiji T."/>
            <person name="Kobatake N."/>
            <person name="Inagaki H."/>
            <person name="Ikema Y."/>
            <person name="Okamoto S."/>
            <person name="Okitani R."/>
            <person name="Kawakami T."/>
            <person name="Noguchi S."/>
            <person name="Itoh T."/>
            <person name="Shigeta K."/>
            <person name="Senba T."/>
            <person name="Matsumura K."/>
            <person name="Nakajima Y."/>
            <person name="Mizuno T."/>
            <person name="Morinaga M."/>
            <person name="Sasaki M."/>
            <person name="Togashi T."/>
            <person name="Oyama M."/>
            <person name="Hata H."/>
            <person name="Watanabe M."/>
            <person name="Komatsu T."/>
            <person name="Mizushima-Sugano J."/>
            <person name="Satoh T."/>
            <person name="Shirai Y."/>
            <person name="Takahashi Y."/>
            <person name="Nakagawa K."/>
            <person name="Okumura K."/>
            <person name="Nagase T."/>
            <person name="Nomura N."/>
            <person name="Kikuchi H."/>
            <person name="Masuho Y."/>
            <person name="Yamashita R."/>
            <person name="Nakai K."/>
            <person name="Yada T."/>
            <person name="Nakamura Y."/>
            <person name="Ohara O."/>
            <person name="Isogai T."/>
            <person name="Sugano S."/>
        </authorList>
    </citation>
    <scope>NUCLEOTIDE SEQUENCE [LARGE SCALE MRNA] OF 947-1099 (ISOFORM 1)</scope>
    <source>
        <tissue>Amygdala</tissue>
    </source>
</reference>
<reference key="6">
    <citation type="journal article" date="2021" name="Mol. Brain">
        <title>The C. elegans homolog of human panic-disorder risk gene TMEM132D orchestrates neuronal morphogenesis through the WAVE-regulatory complex.</title>
        <authorList>
            <person name="Wang X."/>
            <person name="Jiang W."/>
            <person name="Luo S."/>
            <person name="Yang X."/>
            <person name="Wang C."/>
            <person name="Wang B."/>
            <person name="Dang Y."/>
            <person name="Shen Y."/>
            <person name="Ma D.K."/>
        </authorList>
    </citation>
    <scope>FUNCTION</scope>
    <scope>TISSUE SPECIFICITY</scope>
    <scope>INTERACTION WITH NCKAP</scope>
</reference>
<evidence type="ECO:0000255" key="1"/>
<evidence type="ECO:0000256" key="2">
    <source>
        <dbReference type="SAM" id="MobiDB-lite"/>
    </source>
</evidence>
<evidence type="ECO:0000269" key="3">
    <source>
    </source>
</evidence>
<evidence type="ECO:0000269" key="4">
    <source>
    </source>
</evidence>
<evidence type="ECO:0000303" key="5">
    <source>
    </source>
</evidence>
<evidence type="ECO:0000303" key="6">
    <source>
    </source>
</evidence>
<evidence type="ECO:0000305" key="7"/>
<evidence type="ECO:0000305" key="8">
    <source>
    </source>
</evidence>
<evidence type="ECO:0000312" key="9">
    <source>
        <dbReference type="HGNC" id="HGNC:29411"/>
    </source>
</evidence>
<sequence>MCPSEMGTLWHHWSPVLISLAALFSKVTEGRGILESIQRFSLLPTYLPVTYHINNADVSFFLKEANQDIMRNSSLQSRVESFLIYKSRRLPVLNASYGPFSIEQVVPQDLMLPSNPFGFTNKFSLNWKLKAHILRDKVYLSRPKVQVLFHIMGRDWDDRSAGEKLPCLRVFAFRETREVRGSCRLQGDLGLCVAELELLSSWFSPPTVVAGRRKSVDQPEGTPVELYYTVHPGGERGDCVREDARRSNGIRTGHSDIDESGPPLQRIGSIFLYQTHRKPSLRELRLDNSVAIHYIPKTVRKGDVLTFPVSISRNSTEDRFTLRAKVKKGVNIIGVRASSPSIWDVKERTDYTGKYAPAVIVCQKKAAGSENSADGASYEVMQIDVEVEEPGDLPATQLVTWQVEYPGEITSDLGVSKIYVSPKDLIGVVPLAMEAEILNTAILTGKTVAVPVKVVSVEDDGTVTELLESVECRSSDEDVIKVSDRCDYVFVNGKEMKGKVNVVVNFTYQHLSSPLEMTVWVPRLPLQIEVSDTELNQIKGWRVPIVSSRRPAGDSEEEEDDERRGRGCTLQYQHAMVRVLTQFVAEAAGPGGHLAHLLGSDWQVDITELINDFMQVEEPRIAKLQGGQILMGQELGMTTIQILSPLSDTILAEKTITVLDEKVTITDLGVQLVTGLSLSLQLSPGSNRAIFATAVAQELLQRPKQEAAISCWVQFSDGSVTPLDIYDGKDFSLMATSLDEKVVSIHQDPKFKWPIIAAETEGQGTLVKVEMVISESCQKSKRKSVLAVGTANIKVKFGQNDANPNTSDSRHTGAGVHMENNVSDRRPKKPSQEWGSQEGQYYGSSSMGLMEGRGTTTDRSILQKKKGQESLLDDNSHLQTIPSDLTSFPAQVDLPRSNGEMDGNDLMQASKGLSDLEIGMYALLGVFCLAILVFLINCVTFALKYRHKQVPFEEQEGMSHSHDWVGLSNRTELLENHINFASSQDEQITAIDRGMDFEESKYLLSTNSQKSINGQLFKPLGPIIIDGKDQKSEPPTSPTSKRKRVKFTTFTAVSSDDEYPTRNSIVMSSEDDIKWVCQDLDPGDCKELHNYMERLHENV</sequence>
<organism>
    <name type="scientific">Homo sapiens</name>
    <name type="common">Human</name>
    <dbReference type="NCBI Taxonomy" id="9606"/>
    <lineage>
        <taxon>Eukaryota</taxon>
        <taxon>Metazoa</taxon>
        <taxon>Chordata</taxon>
        <taxon>Craniata</taxon>
        <taxon>Vertebrata</taxon>
        <taxon>Euteleostomi</taxon>
        <taxon>Mammalia</taxon>
        <taxon>Eutheria</taxon>
        <taxon>Euarchontoglires</taxon>
        <taxon>Primates</taxon>
        <taxon>Haplorrhini</taxon>
        <taxon>Catarrhini</taxon>
        <taxon>Hominidae</taxon>
        <taxon>Homo</taxon>
    </lineage>
</organism>
<dbReference type="EMBL" id="AB061814">
    <property type="protein sequence ID" value="BAC97794.1"/>
    <property type="molecule type" value="mRNA"/>
</dbReference>
<dbReference type="EMBL" id="AB075824">
    <property type="protein sequence ID" value="BAB85530.1"/>
    <property type="status" value="ALT_INIT"/>
    <property type="molecule type" value="mRNA"/>
</dbReference>
<dbReference type="EMBL" id="BC114626">
    <property type="protein sequence ID" value="AAI14627.1"/>
    <property type="molecule type" value="mRNA"/>
</dbReference>
<dbReference type="EMBL" id="BC114936">
    <property type="protein sequence ID" value="AAI14937.1"/>
    <property type="molecule type" value="mRNA"/>
</dbReference>
<dbReference type="EMBL" id="AL833234">
    <property type="protein sequence ID" value="CAD38636.1"/>
    <property type="molecule type" value="mRNA"/>
</dbReference>
<dbReference type="EMBL" id="AK094656">
    <property type="status" value="NOT_ANNOTATED_CDS"/>
    <property type="molecule type" value="mRNA"/>
</dbReference>
<dbReference type="CCDS" id="CCDS9266.1">
    <molecule id="Q14C87-1"/>
</dbReference>
<dbReference type="RefSeq" id="NP_597705.2">
    <molecule id="Q14C87-1"/>
    <property type="nucleotide sequence ID" value="NM_133448.3"/>
</dbReference>
<dbReference type="SMR" id="Q14C87"/>
<dbReference type="BioGRID" id="125713">
    <property type="interactions" value="72"/>
</dbReference>
<dbReference type="FunCoup" id="Q14C87">
    <property type="interactions" value="247"/>
</dbReference>
<dbReference type="IntAct" id="Q14C87">
    <property type="interactions" value="1"/>
</dbReference>
<dbReference type="STRING" id="9606.ENSP00000408581"/>
<dbReference type="GlyCosmos" id="Q14C87">
    <property type="glycosylation" value="1 site, No reported glycans"/>
</dbReference>
<dbReference type="GlyGen" id="Q14C87">
    <property type="glycosylation" value="1 site"/>
</dbReference>
<dbReference type="iPTMnet" id="Q14C87"/>
<dbReference type="PhosphoSitePlus" id="Q14C87"/>
<dbReference type="BioMuta" id="TMEM132D"/>
<dbReference type="DMDM" id="121940538"/>
<dbReference type="MassIVE" id="Q14C87"/>
<dbReference type="PaxDb" id="9606-ENSP00000408581"/>
<dbReference type="PeptideAtlas" id="Q14C87"/>
<dbReference type="ProteomicsDB" id="60314">
    <molecule id="Q14C87-1"/>
</dbReference>
<dbReference type="ProteomicsDB" id="60315">
    <molecule id="Q14C87-2"/>
</dbReference>
<dbReference type="TopDownProteomics" id="Q14C87-2">
    <molecule id="Q14C87-2"/>
</dbReference>
<dbReference type="Antibodypedia" id="19379">
    <property type="antibodies" value="86 antibodies from 20 providers"/>
</dbReference>
<dbReference type="DNASU" id="121256"/>
<dbReference type="Ensembl" id="ENST00000389441.8">
    <molecule id="Q14C87-2"/>
    <property type="protein sequence ID" value="ENSP00000374092.4"/>
    <property type="gene ID" value="ENSG00000151952.16"/>
</dbReference>
<dbReference type="Ensembl" id="ENST00000422113.7">
    <molecule id="Q14C87-1"/>
    <property type="protein sequence ID" value="ENSP00000408581.2"/>
    <property type="gene ID" value="ENSG00000151952.16"/>
</dbReference>
<dbReference type="GeneID" id="121256"/>
<dbReference type="KEGG" id="hsa:121256"/>
<dbReference type="MANE-Select" id="ENST00000422113.7">
    <property type="protein sequence ID" value="ENSP00000408581.2"/>
    <property type="RefSeq nucleotide sequence ID" value="NM_133448.3"/>
    <property type="RefSeq protein sequence ID" value="NP_597705.2"/>
</dbReference>
<dbReference type="UCSC" id="uc001uia.3">
    <molecule id="Q14C87-1"/>
    <property type="organism name" value="human"/>
</dbReference>
<dbReference type="AGR" id="HGNC:29411"/>
<dbReference type="CTD" id="121256"/>
<dbReference type="DisGeNET" id="121256"/>
<dbReference type="GeneCards" id="TMEM132D"/>
<dbReference type="HGNC" id="HGNC:29411">
    <property type="gene designation" value="TMEM132D"/>
</dbReference>
<dbReference type="HPA" id="ENSG00000151952">
    <property type="expression patterns" value="Tissue enriched (brain)"/>
</dbReference>
<dbReference type="MIM" id="611257">
    <property type="type" value="gene"/>
</dbReference>
<dbReference type="neXtProt" id="NX_Q14C87"/>
<dbReference type="OpenTargets" id="ENSG00000151952"/>
<dbReference type="PharmGKB" id="PA143485654"/>
<dbReference type="VEuPathDB" id="HostDB:ENSG00000151952"/>
<dbReference type="eggNOG" id="KOG4789">
    <property type="taxonomic scope" value="Eukaryota"/>
</dbReference>
<dbReference type="GeneTree" id="ENSGT00940000158942"/>
<dbReference type="HOGENOM" id="CLU_009871_2_0_1"/>
<dbReference type="InParanoid" id="Q14C87"/>
<dbReference type="OMA" id="DECPTRN"/>
<dbReference type="OrthoDB" id="10026202at2759"/>
<dbReference type="PAN-GO" id="Q14C87">
    <property type="GO annotations" value="0 GO annotations based on evolutionary models"/>
</dbReference>
<dbReference type="PhylomeDB" id="Q14C87"/>
<dbReference type="TreeFam" id="TF314981"/>
<dbReference type="PathwayCommons" id="Q14C87"/>
<dbReference type="SignaLink" id="Q14C87"/>
<dbReference type="BioGRID-ORCS" id="121256">
    <property type="hits" value="18 hits in 1137 CRISPR screens"/>
</dbReference>
<dbReference type="ChiTaRS" id="TMEM132D">
    <property type="organism name" value="human"/>
</dbReference>
<dbReference type="GenomeRNAi" id="121256"/>
<dbReference type="Pharos" id="Q14C87">
    <property type="development level" value="Tbio"/>
</dbReference>
<dbReference type="PRO" id="PR:Q14C87"/>
<dbReference type="Proteomes" id="UP000005640">
    <property type="component" value="Chromosome 12"/>
</dbReference>
<dbReference type="RNAct" id="Q14C87">
    <property type="molecule type" value="protein"/>
</dbReference>
<dbReference type="Bgee" id="ENSG00000151952">
    <property type="expression patterns" value="Expressed in middle temporal gyrus and 61 other cell types or tissues"/>
</dbReference>
<dbReference type="GO" id="GO:0016020">
    <property type="term" value="C:membrane"/>
    <property type="evidence" value="ECO:0000303"/>
    <property type="project" value="UniProtKB"/>
</dbReference>
<dbReference type="InterPro" id="IPR055422">
    <property type="entry name" value="Ig_TMEM132_2nd"/>
</dbReference>
<dbReference type="InterPro" id="IPR055423">
    <property type="entry name" value="Ig_TMEM132_5th"/>
</dbReference>
<dbReference type="InterPro" id="IPR055424">
    <property type="entry name" value="Ig_TMEM132_6th"/>
</dbReference>
<dbReference type="InterPro" id="IPR026307">
    <property type="entry name" value="TMEM132"/>
</dbReference>
<dbReference type="InterPro" id="IPR055421">
    <property type="entry name" value="TMEM132_3rd"/>
</dbReference>
<dbReference type="InterPro" id="IPR031436">
    <property type="entry name" value="TMEM132_C"/>
</dbReference>
<dbReference type="InterPro" id="IPR031437">
    <property type="entry name" value="TMEM132_M"/>
</dbReference>
<dbReference type="InterPro" id="IPR031435">
    <property type="entry name" value="TMEM132_N"/>
</dbReference>
<dbReference type="PANTHER" id="PTHR13388">
    <property type="entry name" value="DETONATOR, ISOFORM E"/>
    <property type="match status" value="1"/>
</dbReference>
<dbReference type="PANTHER" id="PTHR13388:SF2">
    <property type="entry name" value="TRANSMEMBRANE PROTEIN 132D"/>
    <property type="match status" value="1"/>
</dbReference>
<dbReference type="Pfam" id="PF23481">
    <property type="entry name" value="Ig_TMEM132_2nd"/>
    <property type="match status" value="1"/>
</dbReference>
<dbReference type="Pfam" id="PF16070">
    <property type="entry name" value="Ig_TMEM132_4th"/>
    <property type="match status" value="1"/>
</dbReference>
<dbReference type="Pfam" id="PF23486">
    <property type="entry name" value="Ig_TMEM132_5th"/>
    <property type="match status" value="1"/>
</dbReference>
<dbReference type="Pfam" id="PF23487">
    <property type="entry name" value="Ig_TMEM132_6th"/>
    <property type="match status" value="1"/>
</dbReference>
<dbReference type="Pfam" id="PF23039">
    <property type="entry name" value="TMEM132_3rd"/>
    <property type="match status" value="1"/>
</dbReference>
<dbReference type="Pfam" id="PF15706">
    <property type="entry name" value="TMEM132_C"/>
    <property type="match status" value="1"/>
</dbReference>
<dbReference type="Pfam" id="PF15705">
    <property type="entry name" value="TMEM132_N"/>
    <property type="match status" value="1"/>
</dbReference>
<proteinExistence type="evidence at protein level"/>
<keyword id="KW-0025">Alternative splicing</keyword>
<keyword id="KW-0325">Glycoprotein</keyword>
<keyword id="KW-0472">Membrane</keyword>
<keyword id="KW-1267">Proteomics identification</keyword>
<keyword id="KW-1185">Reference proteome</keyword>
<keyword id="KW-0732">Signal</keyword>
<keyword id="KW-0812">Transmembrane</keyword>
<keyword id="KW-1133">Transmembrane helix</keyword>
<accession>Q14C87</accession>
<accession>Q14C96</accession>
<accession>Q76M59</accession>
<accession>Q8N1W9</accession>
<accession>Q8N3Q5</accession>
<accession>Q8TF57</accession>
<protein>
    <recommendedName>
        <fullName>Transmembrane protein 132D</fullName>
    </recommendedName>
    <alternativeName>
        <fullName evidence="6">Mature oligodendrocytes transmembrane protein</fullName>
        <shortName evidence="6">Mature OL transmembrane protein</shortName>
    </alternativeName>
</protein>
<name>T132D_HUMAN</name>
<comment type="function">
    <text evidence="8">Regulate neuronals morphology via inhibition of the WAVE regulatory complex (WCR), a complex that controls F-actin cytoskeletal dynamics.</text>
</comment>
<comment type="subunit">
    <text evidence="4">Interacts (via C-terminus) with NCKAP.</text>
</comment>
<comment type="interaction">
    <interactant intactId="EBI-5235567">
        <id>Q14C87</id>
    </interactant>
    <interactant intactId="EBI-357253">
        <id>P62136</id>
        <label>PPP1CA</label>
    </interactant>
    <organismsDiffer>false</organismsDiffer>
    <experiments>2</experiments>
</comment>
<comment type="subcellular location">
    <subcellularLocation>
        <location evidence="7">Membrane</location>
        <topology evidence="7">Single-pass type I membrane protein</topology>
    </subcellularLocation>
</comment>
<comment type="alternative products">
    <event type="alternative splicing"/>
    <isoform>
        <id>Q14C87-1</id>
        <name>1</name>
        <sequence type="displayed"/>
    </isoform>
    <isoform>
        <id>Q14C87-2</id>
        <name>2</name>
        <sequence type="described" ref="VSP_025307 VSP_025308"/>
    </isoform>
</comment>
<comment type="tissue specificity">
    <text evidence="3 4">Expressed in mature oligodendrocytes. Detected in the brain, lung, pancreas and testis (PubMed:12966072). Highly expressed in mature neurons of the adult nervous system (PubMed:33726789).</text>
</comment>
<comment type="similarity">
    <text evidence="7">Belongs to the TMEM132 family.</text>
</comment>
<comment type="sequence caution" evidence="7">
    <conflict type="erroneous initiation">
        <sequence resource="EMBL-CDS" id="BAB85530"/>
    </conflict>
</comment>